<comment type="function">
    <text>Negatively regulates proliferation of neuronal precursor cells, thereby controlling the timing of postembryonic neurogenesis.</text>
</comment>
<comment type="subcellular location">
    <subcellularLocation>
        <location>Secreted</location>
    </subcellularLocation>
</comment>
<comment type="tissue specificity">
    <text>Synthesized in some glial cells and secreted.</text>
</comment>
<gene>
    <name type="primary">ana</name>
    <name type="ORF">CG8084</name>
</gene>
<proteinExistence type="evidence at transcript level"/>
<keyword id="KW-0217">Developmental protein</keyword>
<keyword id="KW-0221">Differentiation</keyword>
<keyword id="KW-0325">Glycoprotein</keyword>
<keyword id="KW-0524">Neurogenesis</keyword>
<keyword id="KW-1185">Reference proteome</keyword>
<keyword id="KW-0964">Secreted</keyword>
<keyword id="KW-0732">Signal</keyword>
<protein>
    <recommendedName>
        <fullName>Protein anachronism</fullName>
    </recommendedName>
</protein>
<organism>
    <name type="scientific">Drosophila melanogaster</name>
    <name type="common">Fruit fly</name>
    <dbReference type="NCBI Taxonomy" id="7227"/>
    <lineage>
        <taxon>Eukaryota</taxon>
        <taxon>Metazoa</taxon>
        <taxon>Ecdysozoa</taxon>
        <taxon>Arthropoda</taxon>
        <taxon>Hexapoda</taxon>
        <taxon>Insecta</taxon>
        <taxon>Pterygota</taxon>
        <taxon>Neoptera</taxon>
        <taxon>Endopterygota</taxon>
        <taxon>Diptera</taxon>
        <taxon>Brachycera</taxon>
        <taxon>Muscomorpha</taxon>
        <taxon>Ephydroidea</taxon>
        <taxon>Drosophilidae</taxon>
        <taxon>Drosophila</taxon>
        <taxon>Sophophora</taxon>
    </lineage>
</organism>
<evidence type="ECO:0000255" key="1"/>
<evidence type="ECO:0000256" key="2">
    <source>
        <dbReference type="SAM" id="MobiDB-lite"/>
    </source>
</evidence>
<evidence type="ECO:0000305" key="3"/>
<name>ANA_DROME</name>
<accession>Q26307</accession>
<accession>Q9V524</accession>
<dbReference type="EMBL" id="S63815">
    <property type="protein sequence ID" value="AAB27582.1"/>
    <property type="molecule type" value="mRNA"/>
</dbReference>
<dbReference type="EMBL" id="AE013599">
    <property type="protein sequence ID" value="AAF58998.1"/>
    <property type="molecule type" value="Genomic_DNA"/>
</dbReference>
<dbReference type="RefSeq" id="NP_477038.1">
    <property type="nucleotide sequence ID" value="NM_057690.3"/>
</dbReference>
<dbReference type="BioGRID" id="61751">
    <property type="interactions" value="2"/>
</dbReference>
<dbReference type="DIP" id="DIP-21780N"/>
<dbReference type="FunCoup" id="Q26307">
    <property type="interactions" value="1"/>
</dbReference>
<dbReference type="IntAct" id="Q26307">
    <property type="interactions" value="4"/>
</dbReference>
<dbReference type="STRING" id="7227.FBpp0289728"/>
<dbReference type="GlyCosmos" id="Q26307">
    <property type="glycosylation" value="6 sites, No reported glycans"/>
</dbReference>
<dbReference type="GlyGen" id="Q26307">
    <property type="glycosylation" value="6 sites"/>
</dbReference>
<dbReference type="PaxDb" id="7227-FBpp0289728"/>
<dbReference type="DNASU" id="35913"/>
<dbReference type="EnsemblMetazoa" id="FBtr0088559">
    <property type="protein sequence ID" value="FBpp0087642"/>
    <property type="gene ID" value="FBgn0011746"/>
</dbReference>
<dbReference type="GeneID" id="35913"/>
<dbReference type="KEGG" id="dme:Dmel_CG8084"/>
<dbReference type="UCSC" id="CG8084-RA">
    <property type="organism name" value="d. melanogaster"/>
</dbReference>
<dbReference type="AGR" id="FB:FBgn0011746"/>
<dbReference type="CTD" id="35913"/>
<dbReference type="FlyBase" id="FBgn0011746">
    <property type="gene designation" value="ana"/>
</dbReference>
<dbReference type="VEuPathDB" id="VectorBase:FBgn0011746"/>
<dbReference type="eggNOG" id="ENOG502SAYS">
    <property type="taxonomic scope" value="Eukaryota"/>
</dbReference>
<dbReference type="HOGENOM" id="CLU_575240_0_0_1"/>
<dbReference type="InParanoid" id="Q26307"/>
<dbReference type="OrthoDB" id="6287506at2759"/>
<dbReference type="PhylomeDB" id="Q26307"/>
<dbReference type="BioGRID-ORCS" id="35913">
    <property type="hits" value="0 hits in 1 CRISPR screen"/>
</dbReference>
<dbReference type="GenomeRNAi" id="35913"/>
<dbReference type="PRO" id="PR:Q26307"/>
<dbReference type="Proteomes" id="UP000000803">
    <property type="component" value="Chromosome 2R"/>
</dbReference>
<dbReference type="Bgee" id="FBgn0011746">
    <property type="expression patterns" value="Expressed in oviduct (Drosophila) and 49 other cell types or tissues"/>
</dbReference>
<dbReference type="ExpressionAtlas" id="Q26307">
    <property type="expression patterns" value="baseline and differential"/>
</dbReference>
<dbReference type="GO" id="GO:0005576">
    <property type="term" value="C:extracellular region"/>
    <property type="evidence" value="ECO:0007669"/>
    <property type="project" value="UniProtKB-SubCell"/>
</dbReference>
<dbReference type="GO" id="GO:0030154">
    <property type="term" value="P:cell differentiation"/>
    <property type="evidence" value="ECO:0007669"/>
    <property type="project" value="UniProtKB-KW"/>
</dbReference>
<dbReference type="GO" id="GO:0007406">
    <property type="term" value="P:negative regulation of neuroblast proliferation"/>
    <property type="evidence" value="ECO:0000315"/>
    <property type="project" value="FlyBase"/>
</dbReference>
<dbReference type="GO" id="GO:0007399">
    <property type="term" value="P:nervous system development"/>
    <property type="evidence" value="ECO:0007669"/>
    <property type="project" value="UniProtKB-KW"/>
</dbReference>
<reference key="1">
    <citation type="journal article" date="1993" name="Cell">
        <title>The Drosophila anachronism locus: a glycoprotein secreted by glia inhibits neuroblast proliferation.</title>
        <authorList>
            <person name="Ebens A.J."/>
            <person name="Garren H."/>
            <person name="Cheyette B.N.R."/>
            <person name="Zipursky S.L."/>
        </authorList>
    </citation>
    <scope>NUCLEOTIDE SEQUENCE [MRNA]</scope>
    <source>
        <tissue>Eye imaginal disk</tissue>
    </source>
</reference>
<reference key="2">
    <citation type="journal article" date="2000" name="Science">
        <title>The genome sequence of Drosophila melanogaster.</title>
        <authorList>
            <person name="Adams M.D."/>
            <person name="Celniker S.E."/>
            <person name="Holt R.A."/>
            <person name="Evans C.A."/>
            <person name="Gocayne J.D."/>
            <person name="Amanatides P.G."/>
            <person name="Scherer S.E."/>
            <person name="Li P.W."/>
            <person name="Hoskins R.A."/>
            <person name="Galle R.F."/>
            <person name="George R.A."/>
            <person name="Lewis S.E."/>
            <person name="Richards S."/>
            <person name="Ashburner M."/>
            <person name="Henderson S.N."/>
            <person name="Sutton G.G."/>
            <person name="Wortman J.R."/>
            <person name="Yandell M.D."/>
            <person name="Zhang Q."/>
            <person name="Chen L.X."/>
            <person name="Brandon R.C."/>
            <person name="Rogers Y.-H.C."/>
            <person name="Blazej R.G."/>
            <person name="Champe M."/>
            <person name="Pfeiffer B.D."/>
            <person name="Wan K.H."/>
            <person name="Doyle C."/>
            <person name="Baxter E.G."/>
            <person name="Helt G."/>
            <person name="Nelson C.R."/>
            <person name="Miklos G.L.G."/>
            <person name="Abril J.F."/>
            <person name="Agbayani A."/>
            <person name="An H.-J."/>
            <person name="Andrews-Pfannkoch C."/>
            <person name="Baldwin D."/>
            <person name="Ballew R.M."/>
            <person name="Basu A."/>
            <person name="Baxendale J."/>
            <person name="Bayraktaroglu L."/>
            <person name="Beasley E.M."/>
            <person name="Beeson K.Y."/>
            <person name="Benos P.V."/>
            <person name="Berman B.P."/>
            <person name="Bhandari D."/>
            <person name="Bolshakov S."/>
            <person name="Borkova D."/>
            <person name="Botchan M.R."/>
            <person name="Bouck J."/>
            <person name="Brokstein P."/>
            <person name="Brottier P."/>
            <person name="Burtis K.C."/>
            <person name="Busam D.A."/>
            <person name="Butler H."/>
            <person name="Cadieu E."/>
            <person name="Center A."/>
            <person name="Chandra I."/>
            <person name="Cherry J.M."/>
            <person name="Cawley S."/>
            <person name="Dahlke C."/>
            <person name="Davenport L.B."/>
            <person name="Davies P."/>
            <person name="de Pablos B."/>
            <person name="Delcher A."/>
            <person name="Deng Z."/>
            <person name="Mays A.D."/>
            <person name="Dew I."/>
            <person name="Dietz S.M."/>
            <person name="Dodson K."/>
            <person name="Doup L.E."/>
            <person name="Downes M."/>
            <person name="Dugan-Rocha S."/>
            <person name="Dunkov B.C."/>
            <person name="Dunn P."/>
            <person name="Durbin K.J."/>
            <person name="Evangelista C.C."/>
            <person name="Ferraz C."/>
            <person name="Ferriera S."/>
            <person name="Fleischmann W."/>
            <person name="Fosler C."/>
            <person name="Gabrielian A.E."/>
            <person name="Garg N.S."/>
            <person name="Gelbart W.M."/>
            <person name="Glasser K."/>
            <person name="Glodek A."/>
            <person name="Gong F."/>
            <person name="Gorrell J.H."/>
            <person name="Gu Z."/>
            <person name="Guan P."/>
            <person name="Harris M."/>
            <person name="Harris N.L."/>
            <person name="Harvey D.A."/>
            <person name="Heiman T.J."/>
            <person name="Hernandez J.R."/>
            <person name="Houck J."/>
            <person name="Hostin D."/>
            <person name="Houston K.A."/>
            <person name="Howland T.J."/>
            <person name="Wei M.-H."/>
            <person name="Ibegwam C."/>
            <person name="Jalali M."/>
            <person name="Kalush F."/>
            <person name="Karpen G.H."/>
            <person name="Ke Z."/>
            <person name="Kennison J.A."/>
            <person name="Ketchum K.A."/>
            <person name="Kimmel B.E."/>
            <person name="Kodira C.D."/>
            <person name="Kraft C.L."/>
            <person name="Kravitz S."/>
            <person name="Kulp D."/>
            <person name="Lai Z."/>
            <person name="Lasko P."/>
            <person name="Lei Y."/>
            <person name="Levitsky A.A."/>
            <person name="Li J.H."/>
            <person name="Li Z."/>
            <person name="Liang Y."/>
            <person name="Lin X."/>
            <person name="Liu X."/>
            <person name="Mattei B."/>
            <person name="McIntosh T.C."/>
            <person name="McLeod M.P."/>
            <person name="McPherson D."/>
            <person name="Merkulov G."/>
            <person name="Milshina N.V."/>
            <person name="Mobarry C."/>
            <person name="Morris J."/>
            <person name="Moshrefi A."/>
            <person name="Mount S.M."/>
            <person name="Moy M."/>
            <person name="Murphy B."/>
            <person name="Murphy L."/>
            <person name="Muzny D.M."/>
            <person name="Nelson D.L."/>
            <person name="Nelson D.R."/>
            <person name="Nelson K.A."/>
            <person name="Nixon K."/>
            <person name="Nusskern D.R."/>
            <person name="Pacleb J.M."/>
            <person name="Palazzolo M."/>
            <person name="Pittman G.S."/>
            <person name="Pan S."/>
            <person name="Pollard J."/>
            <person name="Puri V."/>
            <person name="Reese M.G."/>
            <person name="Reinert K."/>
            <person name="Remington K."/>
            <person name="Saunders R.D.C."/>
            <person name="Scheeler F."/>
            <person name="Shen H."/>
            <person name="Shue B.C."/>
            <person name="Siden-Kiamos I."/>
            <person name="Simpson M."/>
            <person name="Skupski M.P."/>
            <person name="Smith T.J."/>
            <person name="Spier E."/>
            <person name="Spradling A.C."/>
            <person name="Stapleton M."/>
            <person name="Strong R."/>
            <person name="Sun E."/>
            <person name="Svirskas R."/>
            <person name="Tector C."/>
            <person name="Turner R."/>
            <person name="Venter E."/>
            <person name="Wang A.H."/>
            <person name="Wang X."/>
            <person name="Wang Z.-Y."/>
            <person name="Wassarman D.A."/>
            <person name="Weinstock G.M."/>
            <person name="Weissenbach J."/>
            <person name="Williams S.M."/>
            <person name="Woodage T."/>
            <person name="Worley K.C."/>
            <person name="Wu D."/>
            <person name="Yang S."/>
            <person name="Yao Q.A."/>
            <person name="Ye J."/>
            <person name="Yeh R.-F."/>
            <person name="Zaveri J.S."/>
            <person name="Zhan M."/>
            <person name="Zhang G."/>
            <person name="Zhao Q."/>
            <person name="Zheng L."/>
            <person name="Zheng X.H."/>
            <person name="Zhong F.N."/>
            <person name="Zhong W."/>
            <person name="Zhou X."/>
            <person name="Zhu S.C."/>
            <person name="Zhu X."/>
            <person name="Smith H.O."/>
            <person name="Gibbs R.A."/>
            <person name="Myers E.W."/>
            <person name="Rubin G.M."/>
            <person name="Venter J.C."/>
        </authorList>
    </citation>
    <scope>NUCLEOTIDE SEQUENCE [LARGE SCALE GENOMIC DNA]</scope>
    <source>
        <strain>Berkeley</strain>
    </source>
</reference>
<reference key="3">
    <citation type="journal article" date="2002" name="Genome Biol.">
        <title>Annotation of the Drosophila melanogaster euchromatic genome: a systematic review.</title>
        <authorList>
            <person name="Misra S."/>
            <person name="Crosby M.A."/>
            <person name="Mungall C.J."/>
            <person name="Matthews B.B."/>
            <person name="Campbell K.S."/>
            <person name="Hradecky P."/>
            <person name="Huang Y."/>
            <person name="Kaminker J.S."/>
            <person name="Millburn G.H."/>
            <person name="Prochnik S.E."/>
            <person name="Smith C.D."/>
            <person name="Tupy J.L."/>
            <person name="Whitfield E.J."/>
            <person name="Bayraktaroglu L."/>
            <person name="Berman B.P."/>
            <person name="Bettencourt B.R."/>
            <person name="Celniker S.E."/>
            <person name="de Grey A.D.N.J."/>
            <person name="Drysdale R.A."/>
            <person name="Harris N.L."/>
            <person name="Richter J."/>
            <person name="Russo S."/>
            <person name="Schroeder A.J."/>
            <person name="Shu S.Q."/>
            <person name="Stapleton M."/>
            <person name="Yamada C."/>
            <person name="Ashburner M."/>
            <person name="Gelbart W.M."/>
            <person name="Rubin G.M."/>
            <person name="Lewis S.E."/>
        </authorList>
    </citation>
    <scope>GENOME REANNOTATION</scope>
    <source>
        <strain>Berkeley</strain>
    </source>
</reference>
<feature type="signal peptide" evidence="1">
    <location>
        <begin position="1"/>
        <end position="33"/>
    </location>
</feature>
<feature type="chain" id="PRO_0000020730" description="Protein anachronism">
    <location>
        <begin position="34"/>
        <end position="474"/>
    </location>
</feature>
<feature type="region of interest" description="Disordered" evidence="2">
    <location>
        <begin position="173"/>
        <end position="195"/>
    </location>
</feature>
<feature type="region of interest" description="Disordered" evidence="2">
    <location>
        <begin position="359"/>
        <end position="474"/>
    </location>
</feature>
<feature type="compositionally biased region" description="Polar residues" evidence="2">
    <location>
        <begin position="183"/>
        <end position="195"/>
    </location>
</feature>
<feature type="compositionally biased region" description="Polar residues" evidence="2">
    <location>
        <begin position="359"/>
        <end position="372"/>
    </location>
</feature>
<feature type="compositionally biased region" description="Basic residues" evidence="2">
    <location>
        <begin position="390"/>
        <end position="400"/>
    </location>
</feature>
<feature type="compositionally biased region" description="Basic residues" evidence="2">
    <location>
        <begin position="437"/>
        <end position="474"/>
    </location>
</feature>
<feature type="glycosylation site" description="N-linked (GlcNAc...) asparagine" evidence="1">
    <location>
        <position position="54"/>
    </location>
</feature>
<feature type="glycosylation site" description="N-linked (GlcNAc...) asparagine" evidence="1">
    <location>
        <position position="62"/>
    </location>
</feature>
<feature type="glycosylation site" description="N-linked (GlcNAc...) asparagine" evidence="1">
    <location>
        <position position="73"/>
    </location>
</feature>
<feature type="glycosylation site" description="N-linked (GlcNAc...) asparagine" evidence="1">
    <location>
        <position position="116"/>
    </location>
</feature>
<feature type="glycosylation site" description="N-linked (GlcNAc...) asparagine" evidence="1">
    <location>
        <position position="144"/>
    </location>
</feature>
<feature type="glycosylation site" description="N-linked (GlcNAc...) asparagine" evidence="1">
    <location>
        <position position="342"/>
    </location>
</feature>
<feature type="sequence conflict" description="In Ref. 1; AAB27582." evidence="3" ref="1">
    <original>A</original>
    <variation>G</variation>
    <location>
        <position position="388"/>
    </location>
</feature>
<sequence length="474" mass="54015">MASAMRGEKCERSRIRELVLILSLITMAGDSRATPFDPSFFIEGVQSEVVNPFNRTILNRFNLTEEQILSIQNRSNPNMRDDSAQSSNQQYLQQVATQRLNDIFKRVQKAISNEPNGSASKEKAGFPICNAETTNPEDWSLGNNVTLQFASSVFISNNDDRLSSALLRLYKTNPGQTREHNPGQASTQPISTENPGNTAPNCAEQPPVGPQIRVTVSIVHQQRKKQRKKRTCNTAMLSSSSTGWVEIDVKCALAYWEQQHRQQLRQQQPLQPQLTASVVGILMIEVHDDEENLLRPGLYFAPPTCDQADIAVPWSVYRTEPFKSHLASWTLPRKPRLDIFFNGSNSMKNSYNTPKSRAFIESTTSNSPTIDNQLDESGEYESQQRVHAPLVHHRRHHHNHQQPESESESAQLEAEIEAEELMSSASNSEQQMEPISNHHRHRTGHHHPHHQLHQHHHHHHRHTKHHRIPAHKQE</sequence>